<proteinExistence type="inferred from homology"/>
<reference key="1">
    <citation type="journal article" date="2007" name="Science">
        <title>The Fusarium graminearum genome reveals a link between localized polymorphism and pathogen specialization.</title>
        <authorList>
            <person name="Cuomo C.A."/>
            <person name="Gueldener U."/>
            <person name="Xu J.-R."/>
            <person name="Trail F."/>
            <person name="Turgeon B.G."/>
            <person name="Di Pietro A."/>
            <person name="Walton J.D."/>
            <person name="Ma L.-J."/>
            <person name="Baker S.E."/>
            <person name="Rep M."/>
            <person name="Adam G."/>
            <person name="Antoniw J."/>
            <person name="Baldwin T."/>
            <person name="Calvo S.E."/>
            <person name="Chang Y.-L."/>
            <person name="DeCaprio D."/>
            <person name="Gale L.R."/>
            <person name="Gnerre S."/>
            <person name="Goswami R.S."/>
            <person name="Hammond-Kosack K."/>
            <person name="Harris L.J."/>
            <person name="Hilburn K."/>
            <person name="Kennell J.C."/>
            <person name="Kroken S."/>
            <person name="Magnuson J.K."/>
            <person name="Mannhaupt G."/>
            <person name="Mauceli E.W."/>
            <person name="Mewes H.-W."/>
            <person name="Mitterbauer R."/>
            <person name="Muehlbauer G."/>
            <person name="Muensterkoetter M."/>
            <person name="Nelson D."/>
            <person name="O'Donnell K."/>
            <person name="Ouellet T."/>
            <person name="Qi W."/>
            <person name="Quesneville H."/>
            <person name="Roncero M.I.G."/>
            <person name="Seong K.-Y."/>
            <person name="Tetko I.V."/>
            <person name="Urban M."/>
            <person name="Waalwijk C."/>
            <person name="Ward T.J."/>
            <person name="Yao J."/>
            <person name="Birren B.W."/>
            <person name="Kistler H.C."/>
        </authorList>
    </citation>
    <scope>NUCLEOTIDE SEQUENCE [LARGE SCALE GENOMIC DNA]</scope>
    <source>
        <strain>ATCC MYA-4620 / CBS 123657 / FGSC 9075 / NRRL 31084 / PH-1</strain>
    </source>
</reference>
<reference key="2">
    <citation type="journal article" date="2010" name="Nature">
        <title>Comparative genomics reveals mobile pathogenicity chromosomes in Fusarium.</title>
        <authorList>
            <person name="Ma L.-J."/>
            <person name="van der Does H.C."/>
            <person name="Borkovich K.A."/>
            <person name="Coleman J.J."/>
            <person name="Daboussi M.-J."/>
            <person name="Di Pietro A."/>
            <person name="Dufresne M."/>
            <person name="Freitag M."/>
            <person name="Grabherr M."/>
            <person name="Henrissat B."/>
            <person name="Houterman P.M."/>
            <person name="Kang S."/>
            <person name="Shim W.-B."/>
            <person name="Woloshuk C."/>
            <person name="Xie X."/>
            <person name="Xu J.-R."/>
            <person name="Antoniw J."/>
            <person name="Baker S.E."/>
            <person name="Bluhm B.H."/>
            <person name="Breakspear A."/>
            <person name="Brown D.W."/>
            <person name="Butchko R.A.E."/>
            <person name="Chapman S."/>
            <person name="Coulson R."/>
            <person name="Coutinho P.M."/>
            <person name="Danchin E.G.J."/>
            <person name="Diener A."/>
            <person name="Gale L.R."/>
            <person name="Gardiner D.M."/>
            <person name="Goff S."/>
            <person name="Hammond-Kosack K.E."/>
            <person name="Hilburn K."/>
            <person name="Hua-Van A."/>
            <person name="Jonkers W."/>
            <person name="Kazan K."/>
            <person name="Kodira C.D."/>
            <person name="Koehrsen M."/>
            <person name="Kumar L."/>
            <person name="Lee Y.-H."/>
            <person name="Li L."/>
            <person name="Manners J.M."/>
            <person name="Miranda-Saavedra D."/>
            <person name="Mukherjee M."/>
            <person name="Park G."/>
            <person name="Park J."/>
            <person name="Park S.-Y."/>
            <person name="Proctor R.H."/>
            <person name="Regev A."/>
            <person name="Ruiz-Roldan M.C."/>
            <person name="Sain D."/>
            <person name="Sakthikumar S."/>
            <person name="Sykes S."/>
            <person name="Schwartz D.C."/>
            <person name="Turgeon B.G."/>
            <person name="Wapinski I."/>
            <person name="Yoder O."/>
            <person name="Young S."/>
            <person name="Zeng Q."/>
            <person name="Zhou S."/>
            <person name="Galagan J."/>
            <person name="Cuomo C.A."/>
            <person name="Kistler H.C."/>
            <person name="Rep M."/>
        </authorList>
    </citation>
    <scope>GENOME REANNOTATION</scope>
    <source>
        <strain>ATCC MYA-4620 / CBS 123657 / FGSC 9075 / NRRL 31084 / PH-1</strain>
    </source>
</reference>
<reference key="3">
    <citation type="journal article" date="2015" name="BMC Genomics">
        <title>The completed genome sequence of the pathogenic ascomycete fungus Fusarium graminearum.</title>
        <authorList>
            <person name="King R."/>
            <person name="Urban M."/>
            <person name="Hammond-Kosack M.C.U."/>
            <person name="Hassani-Pak K."/>
            <person name="Hammond-Kosack K.E."/>
        </authorList>
    </citation>
    <scope>NUCLEOTIDE SEQUENCE [LARGE SCALE GENOMIC DNA]</scope>
    <source>
        <strain>ATCC MYA-4620 / CBS 123657 / FGSC 9075 / NRRL 31084 / PH-1</strain>
    </source>
</reference>
<name>EFR3_GIBZE</name>
<organism>
    <name type="scientific">Gibberella zeae (strain ATCC MYA-4620 / CBS 123657 / FGSC 9075 / NRRL 31084 / PH-1)</name>
    <name type="common">Wheat head blight fungus</name>
    <name type="synonym">Fusarium graminearum</name>
    <dbReference type="NCBI Taxonomy" id="229533"/>
    <lineage>
        <taxon>Eukaryota</taxon>
        <taxon>Fungi</taxon>
        <taxon>Dikarya</taxon>
        <taxon>Ascomycota</taxon>
        <taxon>Pezizomycotina</taxon>
        <taxon>Sordariomycetes</taxon>
        <taxon>Hypocreomycetidae</taxon>
        <taxon>Hypocreales</taxon>
        <taxon>Nectriaceae</taxon>
        <taxon>Fusarium</taxon>
    </lineage>
</organism>
<gene>
    <name type="primary">EFR3</name>
    <name type="ORF">FGRRES_08819</name>
    <name type="ORF">FGSG_08819</name>
</gene>
<evidence type="ECO:0000256" key="1">
    <source>
        <dbReference type="SAM" id="MobiDB-lite"/>
    </source>
</evidence>
<evidence type="ECO:0000305" key="2"/>
<dbReference type="EMBL" id="DS231667">
    <property type="protein sequence ID" value="ESU14472.1"/>
    <property type="molecule type" value="Genomic_DNA"/>
</dbReference>
<dbReference type="EMBL" id="HG970333">
    <property type="protein sequence ID" value="CEF77254.1"/>
    <property type="molecule type" value="Genomic_DNA"/>
</dbReference>
<dbReference type="RefSeq" id="XP_011319897.1">
    <property type="nucleotide sequence ID" value="XM_011321595.1"/>
</dbReference>
<dbReference type="STRING" id="229533.Q4I1T9"/>
<dbReference type="GeneID" id="23555804"/>
<dbReference type="KEGG" id="fgr:FGSG_08819"/>
<dbReference type="VEuPathDB" id="FungiDB:FGRAMPH1_01G10903"/>
<dbReference type="eggNOG" id="KOG1877">
    <property type="taxonomic scope" value="Eukaryota"/>
</dbReference>
<dbReference type="HOGENOM" id="CLU_003271_0_0_1"/>
<dbReference type="InParanoid" id="Q4I1T9"/>
<dbReference type="OrthoDB" id="70586at110618"/>
<dbReference type="Proteomes" id="UP000070720">
    <property type="component" value="Chromosome 2"/>
</dbReference>
<dbReference type="GO" id="GO:0005886">
    <property type="term" value="C:plasma membrane"/>
    <property type="evidence" value="ECO:0007669"/>
    <property type="project" value="TreeGrafter"/>
</dbReference>
<dbReference type="GO" id="GO:0072659">
    <property type="term" value="P:protein localization to plasma membrane"/>
    <property type="evidence" value="ECO:0007669"/>
    <property type="project" value="InterPro"/>
</dbReference>
<dbReference type="InterPro" id="IPR039786">
    <property type="entry name" value="EFR3"/>
</dbReference>
<dbReference type="InterPro" id="IPR049150">
    <property type="entry name" value="EFR3_HEAT-like_rpt"/>
</dbReference>
<dbReference type="PANTHER" id="PTHR47766">
    <property type="entry name" value="PROTEIN EFR3"/>
    <property type="match status" value="1"/>
</dbReference>
<dbReference type="PANTHER" id="PTHR47766:SF1">
    <property type="entry name" value="PROTEIN EFR3"/>
    <property type="match status" value="1"/>
</dbReference>
<dbReference type="Pfam" id="PF21072">
    <property type="entry name" value="EFR3"/>
    <property type="match status" value="1"/>
</dbReference>
<sequence length="1117" mass="122556">MNALQQKCRPKHQVLVLKCYPRTAKGAVDVKPNSSELSYLLYYATSRRSKIQKIGAFLEKKTASDVWRLRIGNVQVTLQILSALMEKLHKDSVLIAPFVLKILDTVLRSDDITMIESSLPTFGAFCDYHDAAFLLADQTYLRQYEEIVRLYAQLASTAAPGRESLTTPVKVRWRNAGLEAIRSVSTADALSSITGSQMHVIMPRILENLWSDTPDFLEILHQRLEEEEKVDTEKQLRRRTSIATVGTDGANDPNPVALSGTAGDVDKLAEEEVGVLAMQCLKSIFIVPTRAQIHGATVSLLKFIQEKVAQGNSVVELHDDRERDNGWAISIYGIIARWAPVQDRYTILVAALETLLRIPAQDATLDEQLALVTIMSSLLRSDVNLIGLSMMDVLLGLIKQMRKLFRLRSPASRSDDGNVATAESDTAVRQKNKHLVGRLELCIGDLATHVYYADQIADMVSAIILRLKPSRASSINSSPGGEKNGNEAGPGASTVELSESQQFDHYFCISTGRASGLRAIKEILLVANPQKKLTGNLAMSRNPVPIHVWEGTHWLLRDPDGHVRKAYMEAIVTWLDRETSFASEIAVEEKLPRSRSSIKMSKEASSGINRRAVSNASHRERGSKPRPSQFLALLHLVIYDNALQYVDFETDLVLLHILLTRLVLQLGVNAARYGLPMIYRLQEDVQEIETPLHKVRIAALCHGYFWALSEKFDFKESDIGQAIESEVARRKRKAFWVQGINMPPPSLDQVGIPGEALPQPDWDSASLEREELLPFDDREALVESVVARYHESLQAPPGSPGSPGRNPSGPILGSSLTSTGQADSDVELPVVFREHMLGDWSRDAAAAMLAAAGKSESLTGSKTETTGTRGHLTVKTNGMNGNGLTNGHGPTSPYGSQYNLMRPHSSHGHREKEREGTIPRHRKGSVRSAHSPAALSTGNRGTVASVDQLKLVLSGNPPPKTAGLAGDDDSGDSMVSYDYSLSDMSFNPATQNDQPGSPTSVKRPGTSSKRGPLNTHPPLGGAPNLHEEQNGDGSVPPVPPMPDMNMLGGKRSPIQAMENSFQEKGRRRSLNSRNGDGMRPKSVRSQETKTMDLQDLLRGIDSRPSEGSLGNVTRPPY</sequence>
<accession>Q4I1T9</accession>
<accession>A0A098DE84</accession>
<accession>A0A0E0S179</accession>
<accession>V6RKH7</accession>
<keyword id="KW-1185">Reference proteome</keyword>
<protein>
    <recommendedName>
        <fullName>Protein EFR3</fullName>
    </recommendedName>
</protein>
<comment type="similarity">
    <text evidence="2">Belongs to the EFR3 family.</text>
</comment>
<feature type="chain" id="PRO_0000270779" description="Protein EFR3">
    <location>
        <begin position="1"/>
        <end position="1117"/>
    </location>
</feature>
<feature type="region of interest" description="Disordered" evidence="1">
    <location>
        <begin position="473"/>
        <end position="494"/>
    </location>
</feature>
<feature type="region of interest" description="Disordered" evidence="1">
    <location>
        <begin position="601"/>
        <end position="625"/>
    </location>
</feature>
<feature type="region of interest" description="Disordered" evidence="1">
    <location>
        <begin position="792"/>
        <end position="822"/>
    </location>
</feature>
<feature type="region of interest" description="Disordered" evidence="1">
    <location>
        <begin position="853"/>
        <end position="1117"/>
    </location>
</feature>
<feature type="compositionally biased region" description="Polar residues" evidence="1">
    <location>
        <begin position="601"/>
        <end position="616"/>
    </location>
</feature>
<feature type="compositionally biased region" description="Polar residues" evidence="1">
    <location>
        <begin position="856"/>
        <end position="868"/>
    </location>
</feature>
<feature type="compositionally biased region" description="Basic and acidic residues" evidence="1">
    <location>
        <begin position="908"/>
        <end position="918"/>
    </location>
</feature>
<feature type="compositionally biased region" description="Polar residues" evidence="1">
    <location>
        <begin position="982"/>
        <end position="1009"/>
    </location>
</feature>
<feature type="compositionally biased region" description="Basic and acidic residues" evidence="1">
    <location>
        <begin position="1076"/>
        <end position="1092"/>
    </location>
</feature>